<dbReference type="EMBL" id="Z22178">
    <property type="protein sequence ID" value="CAA80154.1"/>
    <property type="molecule type" value="Genomic_DNA"/>
</dbReference>
<dbReference type="PIR" id="S40744">
    <property type="entry name" value="S40744"/>
</dbReference>
<dbReference type="RefSeq" id="NP_499073.1">
    <property type="nucleotide sequence ID" value="NM_066672.5"/>
</dbReference>
<dbReference type="SMR" id="P34440"/>
<dbReference type="BioGRID" id="50970">
    <property type="interactions" value="4"/>
</dbReference>
<dbReference type="FunCoup" id="P34440">
    <property type="interactions" value="14"/>
</dbReference>
<dbReference type="IntAct" id="P34440">
    <property type="interactions" value="1"/>
</dbReference>
<dbReference type="STRING" id="6239.F54C8.2.1"/>
<dbReference type="PaxDb" id="6239-F54C8.2"/>
<dbReference type="EnsemblMetazoa" id="F54C8.2.1">
    <property type="protein sequence ID" value="F54C8.2.1"/>
    <property type="gene ID" value="WBGene00010036"/>
</dbReference>
<dbReference type="GeneID" id="186223"/>
<dbReference type="KEGG" id="cel:CELE_F54C8.2"/>
<dbReference type="UCSC" id="F54C8.2">
    <property type="organism name" value="c. elegans"/>
</dbReference>
<dbReference type="AGR" id="WB:WBGene00010036"/>
<dbReference type="CTD" id="186223"/>
<dbReference type="WormBase" id="F54C8.2">
    <property type="protein sequence ID" value="CE00188"/>
    <property type="gene ID" value="WBGene00010036"/>
    <property type="gene designation" value="cpar-1"/>
</dbReference>
<dbReference type="eggNOG" id="KOG1745">
    <property type="taxonomic scope" value="Eukaryota"/>
</dbReference>
<dbReference type="GeneTree" id="ENSGT01130000278322"/>
<dbReference type="HOGENOM" id="CLU_071908_0_0_1"/>
<dbReference type="InParanoid" id="P34440"/>
<dbReference type="OrthoDB" id="5858439at2759"/>
<dbReference type="PRO" id="PR:P34440"/>
<dbReference type="Proteomes" id="UP000001940">
    <property type="component" value="Chromosome III"/>
</dbReference>
<dbReference type="Bgee" id="WBGene00010036">
    <property type="expression patterns" value="Expressed in germ line (C elegans) and 4 other cell types or tissues"/>
</dbReference>
<dbReference type="GO" id="GO:0000793">
    <property type="term" value="C:condensed chromosome"/>
    <property type="evidence" value="ECO:0000314"/>
    <property type="project" value="WormBase"/>
</dbReference>
<dbReference type="GO" id="GO:0000786">
    <property type="term" value="C:nucleosome"/>
    <property type="evidence" value="ECO:0007669"/>
    <property type="project" value="UniProtKB-KW"/>
</dbReference>
<dbReference type="GO" id="GO:0005634">
    <property type="term" value="C:nucleus"/>
    <property type="evidence" value="ECO:0000314"/>
    <property type="project" value="UniProtKB"/>
</dbReference>
<dbReference type="GO" id="GO:0003677">
    <property type="term" value="F:DNA binding"/>
    <property type="evidence" value="ECO:0007669"/>
    <property type="project" value="UniProtKB-KW"/>
</dbReference>
<dbReference type="GO" id="GO:0046982">
    <property type="term" value="F:protein heterodimerization activity"/>
    <property type="evidence" value="ECO:0007669"/>
    <property type="project" value="InterPro"/>
</dbReference>
<dbReference type="GO" id="GO:0030527">
    <property type="term" value="F:structural constituent of chromatin"/>
    <property type="evidence" value="ECO:0007669"/>
    <property type="project" value="InterPro"/>
</dbReference>
<dbReference type="GO" id="GO:0000070">
    <property type="term" value="P:mitotic sister chromatid segregation"/>
    <property type="evidence" value="ECO:0000315"/>
    <property type="project" value="UniProtKB"/>
</dbReference>
<dbReference type="CDD" id="cd22911">
    <property type="entry name" value="HFD_H3"/>
    <property type="match status" value="1"/>
</dbReference>
<dbReference type="FunFam" id="1.10.20.10:FF:000102">
    <property type="entry name" value="Histone H3-like centromeric protein CSE4"/>
    <property type="match status" value="1"/>
</dbReference>
<dbReference type="Gene3D" id="1.10.20.10">
    <property type="entry name" value="Histone, subunit A"/>
    <property type="match status" value="1"/>
</dbReference>
<dbReference type="InterPro" id="IPR009072">
    <property type="entry name" value="Histone-fold"/>
</dbReference>
<dbReference type="InterPro" id="IPR007125">
    <property type="entry name" value="Histone_H2A/H2B/H3"/>
</dbReference>
<dbReference type="InterPro" id="IPR000164">
    <property type="entry name" value="Histone_H3/CENP-A"/>
</dbReference>
<dbReference type="PANTHER" id="PTHR45810">
    <property type="entry name" value="HISTONE H3.2"/>
    <property type="match status" value="1"/>
</dbReference>
<dbReference type="Pfam" id="PF00125">
    <property type="entry name" value="Histone"/>
    <property type="match status" value="1"/>
</dbReference>
<dbReference type="PRINTS" id="PR00622">
    <property type="entry name" value="HISTONEH3"/>
</dbReference>
<dbReference type="SMART" id="SM00428">
    <property type="entry name" value="H3"/>
    <property type="match status" value="1"/>
</dbReference>
<dbReference type="SUPFAM" id="SSF47113">
    <property type="entry name" value="Histone-fold"/>
    <property type="match status" value="1"/>
</dbReference>
<dbReference type="PROSITE" id="PS00959">
    <property type="entry name" value="HISTONE_H3_2"/>
    <property type="match status" value="1"/>
</dbReference>
<feature type="chain" id="PRO_0000221378" description="Histone H3-like centromeric protein cpar-1">
    <location>
        <begin position="1"/>
        <end position="261"/>
    </location>
</feature>
<feature type="region of interest" description="Disordered" evidence="2">
    <location>
        <begin position="80"/>
        <end position="150"/>
    </location>
</feature>
<feature type="region of interest" description="H3-like">
    <location>
        <begin position="164"/>
        <end position="261"/>
    </location>
</feature>
<feature type="compositionally biased region" description="Polar residues" evidence="2">
    <location>
        <begin position="113"/>
        <end position="127"/>
    </location>
</feature>
<feature type="compositionally biased region" description="Low complexity" evidence="2">
    <location>
        <begin position="132"/>
        <end position="146"/>
    </location>
</feature>
<feature type="site" description="Cleavage; by sep-1" evidence="7">
    <location>
        <begin position="71"/>
        <end position="72"/>
    </location>
</feature>
<feature type="mutagenesis site" description="Loss of cleavage during meiosis I metaphase-anaphase transition. No effect on chromosome localization." evidence="4">
    <original>EQAR</original>
    <variation>LQAQ</variation>
    <location>
        <begin position="68"/>
        <end position="71"/>
    </location>
</feature>
<organism>
    <name type="scientific">Caenorhabditis elegans</name>
    <dbReference type="NCBI Taxonomy" id="6239"/>
    <lineage>
        <taxon>Eukaryota</taxon>
        <taxon>Metazoa</taxon>
        <taxon>Ecdysozoa</taxon>
        <taxon>Nematoda</taxon>
        <taxon>Chromadorea</taxon>
        <taxon>Rhabditida</taxon>
        <taxon>Rhabditina</taxon>
        <taxon>Rhabditomorpha</taxon>
        <taxon>Rhabditoidea</taxon>
        <taxon>Rhabditidae</taxon>
        <taxon>Peloderinae</taxon>
        <taxon>Caenorhabditis</taxon>
    </lineage>
</organism>
<accession>P34440</accession>
<keyword id="KW-0158">Chromosome</keyword>
<keyword id="KW-0238">DNA-binding</keyword>
<keyword id="KW-0544">Nucleosome core</keyword>
<keyword id="KW-0539">Nucleus</keyword>
<keyword id="KW-1185">Reference proteome</keyword>
<gene>
    <name evidence="5" type="primary">cpar-1</name>
    <name evidence="8" type="ORF">F54C8.2</name>
</gene>
<name>HCP3L_CAEEL</name>
<proteinExistence type="evidence at protein level"/>
<reference key="1">
    <citation type="journal article" date="1994" name="Nature">
        <title>2.2 Mb of contiguous nucleotide sequence from chromosome III of C. elegans.</title>
        <authorList>
            <person name="Wilson R."/>
            <person name="Ainscough R."/>
            <person name="Anderson K."/>
            <person name="Baynes C."/>
            <person name="Berks M."/>
            <person name="Bonfield J."/>
            <person name="Burton J."/>
            <person name="Connell M."/>
            <person name="Copsey T."/>
            <person name="Cooper J."/>
            <person name="Coulson A."/>
            <person name="Craxton M."/>
            <person name="Dear S."/>
            <person name="Du Z."/>
            <person name="Durbin R."/>
            <person name="Favello A."/>
            <person name="Fraser A."/>
            <person name="Fulton L."/>
            <person name="Gardner A."/>
            <person name="Green P."/>
            <person name="Hawkins T."/>
            <person name="Hillier L."/>
            <person name="Jier M."/>
            <person name="Johnston L."/>
            <person name="Jones M."/>
            <person name="Kershaw J."/>
            <person name="Kirsten J."/>
            <person name="Laisster N."/>
            <person name="Latreille P."/>
            <person name="Lightning J."/>
            <person name="Lloyd C."/>
            <person name="Mortimore B."/>
            <person name="O'Callaghan M."/>
            <person name="Parsons J."/>
            <person name="Percy C."/>
            <person name="Rifken L."/>
            <person name="Roopra A."/>
            <person name="Saunders D."/>
            <person name="Shownkeen R."/>
            <person name="Sims M."/>
            <person name="Smaldon N."/>
            <person name="Smith A."/>
            <person name="Smith M."/>
            <person name="Sonnhammer E."/>
            <person name="Staden R."/>
            <person name="Sulston J."/>
            <person name="Thierry-Mieg J."/>
            <person name="Thomas K."/>
            <person name="Vaudin M."/>
            <person name="Vaughan K."/>
            <person name="Waterston R."/>
            <person name="Watson A."/>
            <person name="Weinstock L."/>
            <person name="Wilkinson-Sproat J."/>
            <person name="Wohldman P."/>
        </authorList>
    </citation>
    <scope>NUCLEOTIDE SEQUENCE [LARGE SCALE GENOMIC DNA]</scope>
    <source>
        <strain>Bristol N2</strain>
    </source>
</reference>
<reference key="2">
    <citation type="journal article" date="1998" name="Science">
        <title>Genome sequence of the nematode C. elegans: a platform for investigating biology.</title>
        <authorList>
            <consortium name="The C. elegans sequencing consortium"/>
        </authorList>
    </citation>
    <scope>NUCLEOTIDE SEQUENCE [LARGE SCALE GENOMIC DNA]</scope>
    <source>
        <strain>Bristol N2</strain>
    </source>
</reference>
<reference key="3">
    <citation type="journal article" date="2005" name="Nat. Cell Biol.">
        <title>Differential role of CENP-A in the segregation of holocentric C. elegans chromosomes during meiosis and mitosis.</title>
        <authorList>
            <person name="Monen J."/>
            <person name="Maddox P.S."/>
            <person name="Hyndman F."/>
            <person name="Oegema K."/>
            <person name="Desai A."/>
        </authorList>
    </citation>
    <scope>FUNCTION</scope>
    <scope>SUBCELLULAR LOCATION</scope>
    <scope>DEVELOPMENTAL STAGE</scope>
    <scope>INDUCTION</scope>
</reference>
<reference key="4">
    <citation type="journal article" date="2006" name="Nat. Cell Biol.">
        <authorList>
            <person name="Monen J."/>
            <person name="Maddox P.S."/>
            <person name="Hyndman F."/>
            <person name="Oegema K."/>
            <person name="Desai A."/>
        </authorList>
    </citation>
    <scope>ERRATUM OF PUBMED:16273096</scope>
</reference>
<reference key="5">
    <citation type="journal article" date="2015" name="PLoS ONE">
        <title>Separase Cleaves the N-Tail of the CENP-A Related Protein CPAR-1 at the Meiosis I Metaphase-Anaphase Transition in C. elegans.</title>
        <authorList>
            <person name="Monen J."/>
            <person name="Hattersley N."/>
            <person name="Muroyama A."/>
            <person name="Stevens D."/>
            <person name="Oegema K."/>
            <person name="Desai A."/>
        </authorList>
    </citation>
    <scope>SUBCELLULAR LOCATION</scope>
    <scope>DEVELOPMENTAL STAGE</scope>
    <scope>PROTEOLYTIC CLEAVAGE</scope>
    <scope>MUTAGENESIS OF 68-GLU--ARG-71</scope>
</reference>
<comment type="function">
    <text evidence="3">Histone H3-like variant which exclusively replaces conventional H3 in the nucleosome core of centromeric chromatin at the inner plate of the kinetochore. Required for recruitment and assembly of kinetochore proteins, mitotic progression and chromosome segregation. May serve as an epigenetic mark that propagates centromere identity through replication and cell division. Not required for chromosome segregation during meiosis.</text>
</comment>
<comment type="subunit">
    <text evidence="1">Forms a nucleosome-like histone octamer containing two molecules each of H2A, H2B, cpar-1 and H4 assembled in one cpar-1-H4 heterotetramer and two H2A-H2B heterodimers.</text>
</comment>
<comment type="subcellular location">
    <subcellularLocation>
        <location evidence="3">Nucleus</location>
    </subcellularLocation>
    <subcellularLocation>
        <location evidence="3 4">Chromosome</location>
    </subcellularLocation>
    <text evidence="3 4">Localizes to chromosomes during meiotic prometaphase I and metaphase I (PubMed:16273096, PubMed:25919583). Upon cleavage at the onset of anaphase I, the C-terminus remains localized to chromosomes (PubMed:25919583). The cleaved form transiently associates with chromosome but not centromeres during embryonic mitosis (PubMed:25919583).</text>
</comment>
<comment type="developmental stage">
    <text evidence="3 4">Expressed in oocytes at the late pachytene/diplotene stage and during the subsequent meiotic stages (PubMed:16273096, PubMed:25919583). Expressed in polar bodies (PubMed:25919583). Expressed at low levels in embryos (PubMed:16273096, PubMed:25919583).</text>
</comment>
<comment type="induction">
    <text evidence="3">Present at much lower (&lt;5%) level than hcp-3 (at protein level).</text>
</comment>
<comment type="PTM">
    <text evidence="4">Cleaved at the onset of meiotic anaphase I, likely by separase sep-1.</text>
</comment>
<comment type="similarity">
    <text evidence="6">Belongs to the histone H3 family.</text>
</comment>
<evidence type="ECO:0000250" key="1">
    <source>
        <dbReference type="UniProtKB" id="P49450"/>
    </source>
</evidence>
<evidence type="ECO:0000256" key="2">
    <source>
        <dbReference type="SAM" id="MobiDB-lite"/>
    </source>
</evidence>
<evidence type="ECO:0000269" key="3">
    <source>
    </source>
</evidence>
<evidence type="ECO:0000269" key="4">
    <source>
    </source>
</evidence>
<evidence type="ECO:0000303" key="5">
    <source>
    </source>
</evidence>
<evidence type="ECO:0000305" key="6"/>
<evidence type="ECO:0000305" key="7">
    <source>
    </source>
</evidence>
<evidence type="ECO:0000312" key="8">
    <source>
        <dbReference type="WormBase" id="F54C8.2"/>
    </source>
</evidence>
<sequence length="261" mass="29085">MADDGPIIEEIAEKNGRVARIMQRLQHDTQRVTSVPGFNTSATGYADLIALLDQYKNDLEAVGFNDLEQARRRAPSVDITVGSNSTNLVDYSHGRHDMPSHRRHDSSDEEITAANSHHQSPINVGNRNDTDGTNGRNGSRAGSSSSDRVRMIAGRNRISKTRRYRPGQKALEEIRKYQESEDLLIPKAPFARLVREIMQTSTPFSSDLRIRSDAINALQEASEALLVQMFDGSSLISAHSKRATLTTTDVQLYRRLCLPNL</sequence>
<protein>
    <recommendedName>
        <fullName>Histone H3-like centromeric protein cpar-1</fullName>
    </recommendedName>
    <alternativeName>
        <fullName>CENP-A-related protein 1</fullName>
    </alternativeName>
    <alternativeName>
        <fullName>Centromeric protein A related</fullName>
    </alternativeName>
</protein>